<dbReference type="EMBL" id="AM406670">
    <property type="protein sequence ID" value="CAL94526.1"/>
    <property type="molecule type" value="Genomic_DNA"/>
</dbReference>
<dbReference type="RefSeq" id="WP_011765642.1">
    <property type="nucleotide sequence ID" value="NC_008702.1"/>
</dbReference>
<dbReference type="SMR" id="A1K6S1"/>
<dbReference type="STRING" id="62928.azo1909"/>
<dbReference type="KEGG" id="aoa:dqs_2064"/>
<dbReference type="KEGG" id="azo:azo1909"/>
<dbReference type="eggNOG" id="COG0052">
    <property type="taxonomic scope" value="Bacteria"/>
</dbReference>
<dbReference type="HOGENOM" id="CLU_040318_1_2_4"/>
<dbReference type="OrthoDB" id="9808036at2"/>
<dbReference type="Proteomes" id="UP000002588">
    <property type="component" value="Chromosome"/>
</dbReference>
<dbReference type="GO" id="GO:0022627">
    <property type="term" value="C:cytosolic small ribosomal subunit"/>
    <property type="evidence" value="ECO:0007669"/>
    <property type="project" value="TreeGrafter"/>
</dbReference>
<dbReference type="GO" id="GO:0003735">
    <property type="term" value="F:structural constituent of ribosome"/>
    <property type="evidence" value="ECO:0007669"/>
    <property type="project" value="InterPro"/>
</dbReference>
<dbReference type="GO" id="GO:0006412">
    <property type="term" value="P:translation"/>
    <property type="evidence" value="ECO:0007669"/>
    <property type="project" value="UniProtKB-UniRule"/>
</dbReference>
<dbReference type="CDD" id="cd01425">
    <property type="entry name" value="RPS2"/>
    <property type="match status" value="1"/>
</dbReference>
<dbReference type="FunFam" id="1.10.287.610:FF:000001">
    <property type="entry name" value="30S ribosomal protein S2"/>
    <property type="match status" value="1"/>
</dbReference>
<dbReference type="Gene3D" id="3.40.50.10490">
    <property type="entry name" value="Glucose-6-phosphate isomerase like protein, domain 1"/>
    <property type="match status" value="1"/>
</dbReference>
<dbReference type="Gene3D" id="1.10.287.610">
    <property type="entry name" value="Helix hairpin bin"/>
    <property type="match status" value="1"/>
</dbReference>
<dbReference type="HAMAP" id="MF_00291_B">
    <property type="entry name" value="Ribosomal_uS2_B"/>
    <property type="match status" value="1"/>
</dbReference>
<dbReference type="InterPro" id="IPR001865">
    <property type="entry name" value="Ribosomal_uS2"/>
</dbReference>
<dbReference type="InterPro" id="IPR005706">
    <property type="entry name" value="Ribosomal_uS2_bac/mit/plastid"/>
</dbReference>
<dbReference type="InterPro" id="IPR018130">
    <property type="entry name" value="Ribosomal_uS2_CS"/>
</dbReference>
<dbReference type="InterPro" id="IPR023591">
    <property type="entry name" value="Ribosomal_uS2_flav_dom_sf"/>
</dbReference>
<dbReference type="NCBIfam" id="TIGR01011">
    <property type="entry name" value="rpsB_bact"/>
    <property type="match status" value="1"/>
</dbReference>
<dbReference type="PANTHER" id="PTHR12534">
    <property type="entry name" value="30S RIBOSOMAL PROTEIN S2 PROKARYOTIC AND ORGANELLAR"/>
    <property type="match status" value="1"/>
</dbReference>
<dbReference type="PANTHER" id="PTHR12534:SF0">
    <property type="entry name" value="SMALL RIBOSOMAL SUBUNIT PROTEIN US2M"/>
    <property type="match status" value="1"/>
</dbReference>
<dbReference type="Pfam" id="PF00318">
    <property type="entry name" value="Ribosomal_S2"/>
    <property type="match status" value="1"/>
</dbReference>
<dbReference type="PRINTS" id="PR00395">
    <property type="entry name" value="RIBOSOMALS2"/>
</dbReference>
<dbReference type="SUPFAM" id="SSF52313">
    <property type="entry name" value="Ribosomal protein S2"/>
    <property type="match status" value="1"/>
</dbReference>
<dbReference type="PROSITE" id="PS00962">
    <property type="entry name" value="RIBOSOMAL_S2_1"/>
    <property type="match status" value="1"/>
</dbReference>
<evidence type="ECO:0000255" key="1">
    <source>
        <dbReference type="HAMAP-Rule" id="MF_00291"/>
    </source>
</evidence>
<evidence type="ECO:0000305" key="2"/>
<organism>
    <name type="scientific">Azoarcus sp. (strain BH72)</name>
    <dbReference type="NCBI Taxonomy" id="418699"/>
    <lineage>
        <taxon>Bacteria</taxon>
        <taxon>Pseudomonadati</taxon>
        <taxon>Pseudomonadota</taxon>
        <taxon>Betaproteobacteria</taxon>
        <taxon>Rhodocyclales</taxon>
        <taxon>Zoogloeaceae</taxon>
        <taxon>Azoarcus</taxon>
    </lineage>
</organism>
<feature type="chain" id="PRO_1000003889" description="Small ribosomal subunit protein uS2">
    <location>
        <begin position="1"/>
        <end position="251"/>
    </location>
</feature>
<comment type="similarity">
    <text evidence="1">Belongs to the universal ribosomal protein uS2 family.</text>
</comment>
<sequence>MTVTMRQMLEAGVHFGHQTRFWNPRMAPYIFGQRNKIHIVNLEKTMVKYNEAMNFVRKLAANRGTILFVSTKRQAREILAEEARRAGMPYVDERWLGGMLTNFKTVKQSIKRLKEVEAMIEDGSIERLSKREALTVTRELEKLQKSIGGIKDMGGLPDAIFIIDVGYHKIAVTEAQKLGIPVVGVVDTNHSPEGIDYIIPGNDDSSRAIRLYARGVADAVLEGRSQVLQEIVAAGGDEFVEVEEGSQEQQG</sequence>
<protein>
    <recommendedName>
        <fullName evidence="1">Small ribosomal subunit protein uS2</fullName>
    </recommendedName>
    <alternativeName>
        <fullName evidence="2">30S ribosomal protein S2</fullName>
    </alternativeName>
</protein>
<reference key="1">
    <citation type="journal article" date="2006" name="Nat. Biotechnol.">
        <title>Complete genome of the mutualistic, N2-fixing grass endophyte Azoarcus sp. strain BH72.</title>
        <authorList>
            <person name="Krause A."/>
            <person name="Ramakumar A."/>
            <person name="Bartels D."/>
            <person name="Battistoni F."/>
            <person name="Bekel T."/>
            <person name="Boch J."/>
            <person name="Boehm M."/>
            <person name="Friedrich F."/>
            <person name="Hurek T."/>
            <person name="Krause L."/>
            <person name="Linke B."/>
            <person name="McHardy A.C."/>
            <person name="Sarkar A."/>
            <person name="Schneiker S."/>
            <person name="Syed A.A."/>
            <person name="Thauer R."/>
            <person name="Vorhoelter F.-J."/>
            <person name="Weidner S."/>
            <person name="Puehler A."/>
            <person name="Reinhold-Hurek B."/>
            <person name="Kaiser O."/>
            <person name="Goesmann A."/>
        </authorList>
    </citation>
    <scope>NUCLEOTIDE SEQUENCE [LARGE SCALE GENOMIC DNA]</scope>
    <source>
        <strain>BH72</strain>
    </source>
</reference>
<accession>A1K6S1</accession>
<name>RS2_AZOSB</name>
<gene>
    <name evidence="1" type="primary">rpsB</name>
    <name type="ordered locus">azo1909</name>
</gene>
<proteinExistence type="inferred from homology"/>
<keyword id="KW-1185">Reference proteome</keyword>
<keyword id="KW-0687">Ribonucleoprotein</keyword>
<keyword id="KW-0689">Ribosomal protein</keyword>